<sequence length="331" mass="35293">MKVTVLVGGVGGARFLLGVQHLLGLGQFARDDARGPDAHELTAVVNVGDDTWMFGVRICPDLDTCMYTLGGGIDPDRGWGHRDETWHAKEELAAYGVQPDWFGLGDRDLATHLVRSQMLRAGYPLSQVTEALCDRWNPGARLLPASDDRSETHVVITDPDTDERRAIHFQEWWVRYRAKVPTHSFAFVGADKATTAPGVTDAIADADVVLLAPSNPVVSIGSILAIPGIRGALRSTSAKIIGYSPIIAGKPLRGMADECLSVIGVASTSEAVGRHYGARSGTGILDGWLVHEGDSAQIDGVQVEAVPLLMTDPATTAEMVRAGVRLAGVTL</sequence>
<evidence type="ECO:0000255" key="1">
    <source>
        <dbReference type="HAMAP-Rule" id="MF_01257"/>
    </source>
</evidence>
<keyword id="KW-0460">Magnesium</keyword>
<keyword id="KW-0808">Transferase</keyword>
<accession>A1UCJ5</accession>
<reference key="1">
    <citation type="submission" date="2006-12" db="EMBL/GenBank/DDBJ databases">
        <title>Complete sequence of chromosome of Mycobacterium sp. KMS.</title>
        <authorList>
            <consortium name="US DOE Joint Genome Institute"/>
            <person name="Copeland A."/>
            <person name="Lucas S."/>
            <person name="Lapidus A."/>
            <person name="Barry K."/>
            <person name="Detter J.C."/>
            <person name="Glavina del Rio T."/>
            <person name="Hammon N."/>
            <person name="Israni S."/>
            <person name="Dalin E."/>
            <person name="Tice H."/>
            <person name="Pitluck S."/>
            <person name="Kiss H."/>
            <person name="Brettin T."/>
            <person name="Bruce D."/>
            <person name="Han C."/>
            <person name="Tapia R."/>
            <person name="Gilna P."/>
            <person name="Schmutz J."/>
            <person name="Larimer F."/>
            <person name="Land M."/>
            <person name="Hauser L."/>
            <person name="Kyrpides N."/>
            <person name="Mikhailova N."/>
            <person name="Miller C.D."/>
            <person name="Richardson P."/>
        </authorList>
    </citation>
    <scope>NUCLEOTIDE SEQUENCE [LARGE SCALE GENOMIC DNA]</scope>
    <source>
        <strain>KMS</strain>
    </source>
</reference>
<dbReference type="EC" id="2.7.8.28" evidence="1"/>
<dbReference type="EMBL" id="CP000518">
    <property type="protein sequence ID" value="ABL90553.1"/>
    <property type="molecule type" value="Genomic_DNA"/>
</dbReference>
<dbReference type="SMR" id="A1UCJ5"/>
<dbReference type="STRING" id="189918.Mkms_1341"/>
<dbReference type="KEGG" id="mkm:Mkms_1341"/>
<dbReference type="HOGENOM" id="CLU_055795_0_0_11"/>
<dbReference type="OrthoDB" id="7466225at2"/>
<dbReference type="UniPathway" id="UPA00071"/>
<dbReference type="GO" id="GO:0043743">
    <property type="term" value="F:LPPG:FO 2-phospho-L-lactate transferase activity"/>
    <property type="evidence" value="ECO:0007669"/>
    <property type="project" value="UniProtKB-EC"/>
</dbReference>
<dbReference type="GO" id="GO:0000287">
    <property type="term" value="F:magnesium ion binding"/>
    <property type="evidence" value="ECO:0007669"/>
    <property type="project" value="InterPro"/>
</dbReference>
<dbReference type="GO" id="GO:0052645">
    <property type="term" value="P:F420-0 metabolic process"/>
    <property type="evidence" value="ECO:0007669"/>
    <property type="project" value="UniProtKB-UniRule"/>
</dbReference>
<dbReference type="CDD" id="cd07186">
    <property type="entry name" value="CofD_like"/>
    <property type="match status" value="1"/>
</dbReference>
<dbReference type="FunFam" id="1.10.8.240:FF:000001">
    <property type="entry name" value="2-phospho-L-lactate transferase"/>
    <property type="match status" value="1"/>
</dbReference>
<dbReference type="Gene3D" id="1.10.8.240">
    <property type="entry name" value="CofD-like domain"/>
    <property type="match status" value="1"/>
</dbReference>
<dbReference type="Gene3D" id="3.40.50.10680">
    <property type="entry name" value="CofD-like domains"/>
    <property type="match status" value="1"/>
</dbReference>
<dbReference type="HAMAP" id="MF_01257">
    <property type="entry name" value="CofD"/>
    <property type="match status" value="1"/>
</dbReference>
<dbReference type="InterPro" id="IPR002882">
    <property type="entry name" value="CofD"/>
</dbReference>
<dbReference type="InterPro" id="IPR038136">
    <property type="entry name" value="CofD-like_dom_sf"/>
</dbReference>
<dbReference type="InterPro" id="IPR010115">
    <property type="entry name" value="FbiA/CofD"/>
</dbReference>
<dbReference type="NCBIfam" id="TIGR01819">
    <property type="entry name" value="F420_cofD"/>
    <property type="match status" value="1"/>
</dbReference>
<dbReference type="PANTHER" id="PTHR43007">
    <property type="entry name" value="2-PHOSPHO-L-LACTATE TRANSFERASE"/>
    <property type="match status" value="1"/>
</dbReference>
<dbReference type="PANTHER" id="PTHR43007:SF1">
    <property type="entry name" value="2-PHOSPHO-L-LACTATE TRANSFERASE"/>
    <property type="match status" value="1"/>
</dbReference>
<dbReference type="Pfam" id="PF01933">
    <property type="entry name" value="CofD"/>
    <property type="match status" value="1"/>
</dbReference>
<dbReference type="SUPFAM" id="SSF142338">
    <property type="entry name" value="CofD-like"/>
    <property type="match status" value="1"/>
</dbReference>
<proteinExistence type="inferred from homology"/>
<gene>
    <name evidence="1" type="primary">fbiA</name>
    <name type="ordered locus">Mkms_1341</name>
</gene>
<comment type="function">
    <text evidence="1">Catalyzes the transfer of the phosphoenolpyruvate moiety from enoylpyruvoyl-2-diphospho-5'-guanosine (EPPG) to 7,8-didemethyl-8-hydroxy-5-deazariboflavin (FO) with the formation of dehydro coenzyme F420-0 and GMP.</text>
</comment>
<comment type="catalytic activity">
    <reaction evidence="1">
        <text>enolpyruvoyl-2-diphospho-5'-guanosine + 7,8-didemethyl-8-hydroxy-5-deazariboflavin = dehydro coenzyme F420-0 + GMP + H(+)</text>
        <dbReference type="Rhea" id="RHEA:27510"/>
        <dbReference type="ChEBI" id="CHEBI:15378"/>
        <dbReference type="ChEBI" id="CHEBI:58115"/>
        <dbReference type="ChEBI" id="CHEBI:59904"/>
        <dbReference type="ChEBI" id="CHEBI:143701"/>
        <dbReference type="ChEBI" id="CHEBI:143705"/>
        <dbReference type="EC" id="2.7.8.28"/>
    </reaction>
</comment>
<comment type="cofactor">
    <cofactor evidence="1">
        <name>Mg(2+)</name>
        <dbReference type="ChEBI" id="CHEBI:18420"/>
    </cofactor>
</comment>
<comment type="pathway">
    <text evidence="1">Cofactor biosynthesis; coenzyme F420 biosynthesis.</text>
</comment>
<comment type="subunit">
    <text evidence="1">Homodimer.</text>
</comment>
<comment type="similarity">
    <text evidence="1">Belongs to the CofD family.</text>
</comment>
<name>FBIA_MYCSK</name>
<protein>
    <recommendedName>
        <fullName evidence="1">Phosphoenolpyruvate transferase</fullName>
        <ecNumber evidence="1">2.7.8.28</ecNumber>
    </recommendedName>
    <alternativeName>
        <fullName evidence="1">EPPG:FO PEP transferase</fullName>
    </alternativeName>
</protein>
<feature type="chain" id="PRO_1000067253" description="Phosphoenolpyruvate transferase">
    <location>
        <begin position="1"/>
        <end position="331"/>
    </location>
</feature>
<feature type="binding site" evidence="1">
    <location>
        <position position="63"/>
    </location>
    <ligand>
        <name>7,8-didemethyl-8-hydroxy-5-deazariboflavin</name>
        <dbReference type="ChEBI" id="CHEBI:59904"/>
    </ligand>
</feature>
<organism>
    <name type="scientific">Mycobacterium sp. (strain KMS)</name>
    <dbReference type="NCBI Taxonomy" id="189918"/>
    <lineage>
        <taxon>Bacteria</taxon>
        <taxon>Bacillati</taxon>
        <taxon>Actinomycetota</taxon>
        <taxon>Actinomycetes</taxon>
        <taxon>Mycobacteriales</taxon>
        <taxon>Mycobacteriaceae</taxon>
        <taxon>Mycobacterium</taxon>
    </lineage>
</organism>